<gene>
    <name type="primary">tlcA</name>
    <name type="synonym">tlc1</name>
    <name type="ordered locus">RT0079</name>
</gene>
<name>TLCA_RICTY</name>
<reference key="1">
    <citation type="journal article" date="2004" name="J. Bacteriol.">
        <title>Complete genome sequence of Rickettsia typhi and comparison with sequences of other Rickettsiae.</title>
        <authorList>
            <person name="McLeod M.P."/>
            <person name="Qin X."/>
            <person name="Karpathy S.E."/>
            <person name="Gioia J."/>
            <person name="Highlander S.K."/>
            <person name="Fox G.E."/>
            <person name="McNeill T.Z."/>
            <person name="Jiang H."/>
            <person name="Muzny D."/>
            <person name="Jacob L.S."/>
            <person name="Hawes A.C."/>
            <person name="Sodergren E."/>
            <person name="Gill R."/>
            <person name="Hume J."/>
            <person name="Morgan M."/>
            <person name="Fan G."/>
            <person name="Amin A.G."/>
            <person name="Gibbs R.A."/>
            <person name="Hong C."/>
            <person name="Yu X.-J."/>
            <person name="Walker D.H."/>
            <person name="Weinstock G.M."/>
        </authorList>
    </citation>
    <scope>NUCLEOTIDE SEQUENCE [LARGE SCALE GENOMIC DNA]</scope>
    <source>
        <strain>ATCC VR-144 / Wilmington</strain>
    </source>
</reference>
<protein>
    <recommendedName>
        <fullName>ADP,ATP carrier protein 1</fullName>
    </recommendedName>
    <alternativeName>
        <fullName>ADP/ATP translocase 1</fullName>
    </alternativeName>
</protein>
<comment type="function">
    <text evidence="1">Provides the rickettsial cell with host ATP in exchange for rickettsial ADP. This is an obligate exchange system. This energy acquiring activity is an important component of rickettsial parasitism (By similarity).</text>
</comment>
<comment type="subcellular location">
    <subcellularLocation>
        <location>Cell membrane</location>
        <topology>Multi-pass membrane protein</topology>
    </subcellularLocation>
</comment>
<comment type="similarity">
    <text evidence="3">Belongs to the ADP/ATP translocase tlc family.</text>
</comment>
<keyword id="KW-0067">ATP-binding</keyword>
<keyword id="KW-1003">Cell membrane</keyword>
<keyword id="KW-1015">Disulfide bond</keyword>
<keyword id="KW-0472">Membrane</keyword>
<keyword id="KW-0547">Nucleotide-binding</keyword>
<keyword id="KW-0812">Transmembrane</keyword>
<keyword id="KW-1133">Transmembrane helix</keyword>
<keyword id="KW-0813">Transport</keyword>
<organism>
    <name type="scientific">Rickettsia typhi (strain ATCC VR-144 / Wilmington)</name>
    <dbReference type="NCBI Taxonomy" id="257363"/>
    <lineage>
        <taxon>Bacteria</taxon>
        <taxon>Pseudomonadati</taxon>
        <taxon>Pseudomonadota</taxon>
        <taxon>Alphaproteobacteria</taxon>
        <taxon>Rickettsiales</taxon>
        <taxon>Rickettsiaceae</taxon>
        <taxon>Rickettsieae</taxon>
        <taxon>Rickettsia</taxon>
        <taxon>typhus group</taxon>
    </lineage>
</organism>
<feature type="chain" id="PRO_0000286468" description="ADP,ATP carrier protein 1">
    <location>
        <begin position="1"/>
        <end position="498"/>
    </location>
</feature>
<feature type="topological domain" description="Cytoplasmic" evidence="3">
    <location>
        <begin position="1"/>
        <end position="33"/>
    </location>
</feature>
<feature type="transmembrane region" description="Helical" evidence="3">
    <location>
        <begin position="34"/>
        <end position="54"/>
    </location>
</feature>
<feature type="topological domain" description="Extracellular" evidence="3">
    <location>
        <begin position="55"/>
        <end position="67"/>
    </location>
</feature>
<feature type="transmembrane region" description="Helical" evidence="3">
    <location>
        <begin position="68"/>
        <end position="88"/>
    </location>
</feature>
<feature type="topological domain" description="Cytoplasmic" evidence="3">
    <location>
        <begin position="89"/>
        <end position="92"/>
    </location>
</feature>
<feature type="transmembrane region" description="Helical" evidence="3">
    <location>
        <begin position="93"/>
        <end position="113"/>
    </location>
</feature>
<feature type="topological domain" description="Extracellular" evidence="3">
    <location>
        <begin position="114"/>
        <end position="147"/>
    </location>
</feature>
<feature type="transmembrane region" description="Helical" evidence="3">
    <location>
        <begin position="148"/>
        <end position="168"/>
    </location>
</feature>
<feature type="topological domain" description="Cytoplasmic" evidence="3">
    <location>
        <begin position="169"/>
        <end position="184"/>
    </location>
</feature>
<feature type="transmembrane region" description="Helical" evidence="3">
    <location>
        <begin position="185"/>
        <end position="205"/>
    </location>
</feature>
<feature type="topological domain" description="Extracellular" evidence="3">
    <location>
        <begin position="206"/>
        <end position="218"/>
    </location>
</feature>
<feature type="transmembrane region" description="Helical" evidence="3">
    <location>
        <begin position="219"/>
        <end position="239"/>
    </location>
</feature>
<feature type="topological domain" description="Cytoplasmic" evidence="3">
    <location>
        <begin position="240"/>
        <end position="279"/>
    </location>
</feature>
<feature type="transmembrane region" description="Helical" evidence="3">
    <location>
        <begin position="280"/>
        <end position="300"/>
    </location>
</feature>
<feature type="topological domain" description="Extracellular" evidence="3">
    <location>
        <begin position="301"/>
        <end position="320"/>
    </location>
</feature>
<feature type="transmembrane region" description="Helical" evidence="3">
    <location>
        <begin position="321"/>
        <end position="341"/>
    </location>
</feature>
<feature type="topological domain" description="Cytoplasmic" evidence="3">
    <location>
        <begin position="342"/>
        <end position="348"/>
    </location>
</feature>
<feature type="transmembrane region" description="Helical" evidence="3">
    <location>
        <begin position="349"/>
        <end position="369"/>
    </location>
</feature>
<feature type="topological domain" description="Extracellular" evidence="3">
    <location>
        <begin position="370"/>
        <end position="379"/>
    </location>
</feature>
<feature type="transmembrane region" description="Helical" evidence="3">
    <location>
        <begin position="380"/>
        <end position="400"/>
    </location>
</feature>
<feature type="topological domain" description="Cytoplasmic" evidence="3">
    <location>
        <begin position="401"/>
        <end position="438"/>
    </location>
</feature>
<feature type="transmembrane region" description="Helical" evidence="3">
    <location>
        <begin position="439"/>
        <end position="459"/>
    </location>
</feature>
<feature type="topological domain" description="Extracellular" evidence="3">
    <location>
        <begin position="460"/>
        <end position="465"/>
    </location>
</feature>
<feature type="transmembrane region" description="Helical" evidence="3">
    <location>
        <begin position="466"/>
        <end position="486"/>
    </location>
</feature>
<feature type="topological domain" description="Cytoplasmic" evidence="3">
    <location>
        <begin position="487"/>
        <end position="498"/>
    </location>
</feature>
<feature type="binding site" evidence="2">
    <location>
        <begin position="436"/>
        <end position="442"/>
    </location>
    <ligand>
        <name>ATP</name>
        <dbReference type="ChEBI" id="CHEBI:30616"/>
    </ligand>
</feature>
<feature type="disulfide bond" evidence="3">
    <location>
        <begin position="37"/>
        <end position="85"/>
    </location>
</feature>
<sequence>MSTSKSENYLSELRKIIWPIEQHENKKFLPLAFMMFCILLNYSTLRSIKDGFVVTDIGTESISFLKTYIVLPSAVIAMVIYVKLCDILKQENIFYVITSFFLGYFALFAFVLYPYPDLVHPDHKTIESLSLAYPNFKWFIKIVGKWSFASFYTIAELWGTMMLSLLFWQFANQITKITEAKRFYSMFGLLANLALPVTSVVIGYFLHEKTQIVSEHLKFIPLFVIMITSSFLIILTYRWMNKNVLTDPRLYDPTLVKEKKAKAKLSFIESFKMIFTSKYVGYIALLIIAYGVSVNLVEGVWKSKVKELYPTKEAYTIYMGQFQFYQGWVAIAFMLIGSNILRKVSWLTAAMITPLMMFITGAAFFSFIFFDSVIAMNLTGILASSPLTLAVMFGMIQNVLSKGVKYSLFDATKNMAYIPLDKDLRVKGQAAVEVIGGRLGKSGGAIIQSTFFILFPAFGFIEATPYFASIFFIIVILWIFAVKGLNKEYQVLVNKNEN</sequence>
<evidence type="ECO:0000250" key="1"/>
<evidence type="ECO:0000255" key="2"/>
<evidence type="ECO:0000305" key="3"/>
<proteinExistence type="inferred from homology"/>
<accession>Q68XS7</accession>
<dbReference type="EMBL" id="AE017197">
    <property type="protein sequence ID" value="AAU03565.1"/>
    <property type="molecule type" value="Genomic_DNA"/>
</dbReference>
<dbReference type="RefSeq" id="WP_011190552.1">
    <property type="nucleotide sequence ID" value="NC_006142.1"/>
</dbReference>
<dbReference type="KEGG" id="rty:RT0079"/>
<dbReference type="eggNOG" id="COG3202">
    <property type="taxonomic scope" value="Bacteria"/>
</dbReference>
<dbReference type="HOGENOM" id="CLU_023964_0_1_5"/>
<dbReference type="OrthoDB" id="19786at2"/>
<dbReference type="Proteomes" id="UP000000604">
    <property type="component" value="Chromosome"/>
</dbReference>
<dbReference type="GO" id="GO:0005886">
    <property type="term" value="C:plasma membrane"/>
    <property type="evidence" value="ECO:0007669"/>
    <property type="project" value="UniProtKB-SubCell"/>
</dbReference>
<dbReference type="GO" id="GO:0005524">
    <property type="term" value="F:ATP binding"/>
    <property type="evidence" value="ECO:0007669"/>
    <property type="project" value="UniProtKB-KW"/>
</dbReference>
<dbReference type="GO" id="GO:0005471">
    <property type="term" value="F:ATP:ADP antiporter activity"/>
    <property type="evidence" value="ECO:0007669"/>
    <property type="project" value="InterPro"/>
</dbReference>
<dbReference type="InterPro" id="IPR004667">
    <property type="entry name" value="ADP_ATP_car_bac_type"/>
</dbReference>
<dbReference type="InterPro" id="IPR036259">
    <property type="entry name" value="MFS_trans_sf"/>
</dbReference>
<dbReference type="NCBIfam" id="TIGR00769">
    <property type="entry name" value="AAA"/>
    <property type="match status" value="1"/>
</dbReference>
<dbReference type="PANTHER" id="PTHR31187">
    <property type="match status" value="1"/>
</dbReference>
<dbReference type="PANTHER" id="PTHR31187:SF1">
    <property type="entry name" value="ADP,ATP CARRIER PROTEIN 1"/>
    <property type="match status" value="1"/>
</dbReference>
<dbReference type="Pfam" id="PF03219">
    <property type="entry name" value="TLC"/>
    <property type="match status" value="1"/>
</dbReference>
<dbReference type="SUPFAM" id="SSF103473">
    <property type="entry name" value="MFS general substrate transporter"/>
    <property type="match status" value="1"/>
</dbReference>